<feature type="chain" id="PRO_0000099853" description="Amine oxidase [flavin-containing] A">
    <location>
        <begin position="1"/>
        <end position="527"/>
    </location>
</feature>
<feature type="topological domain" description="Cytoplasmic" evidence="1">
    <location>
        <begin position="1"/>
        <end position="497"/>
    </location>
</feature>
<feature type="transmembrane region" description="Helical; Anchor for type IV membrane protein" evidence="1">
    <location>
        <begin position="498"/>
        <end position="518"/>
    </location>
</feature>
<feature type="topological domain" description="Mitochondrial intermembrane" evidence="1">
    <location>
        <begin position="519"/>
        <end position="527"/>
    </location>
</feature>
<feature type="region of interest" description="Interaction with membrane phospholipid headgroups" evidence="1">
    <location>
        <begin position="520"/>
        <end position="522"/>
    </location>
</feature>
<feature type="site" description="Important for substrate specificity" evidence="1">
    <location>
        <position position="335"/>
    </location>
</feature>
<feature type="site" description="Important for catalytic activity" evidence="1">
    <location>
        <position position="374"/>
    </location>
</feature>
<feature type="modified residue" description="N-acetylmethionine" evidence="3">
    <location>
        <position position="1"/>
    </location>
</feature>
<feature type="modified residue" description="Phosphoserine" evidence="2">
    <location>
        <position position="383"/>
    </location>
</feature>
<feature type="modified residue" description="S-8alpha-FAD cysteine" evidence="3">
    <location>
        <position position="406"/>
    </location>
</feature>
<feature type="sequence conflict" description="In Ref. 1; CAH89637." evidence="4" ref="1">
    <original>G</original>
    <variation>E</variation>
    <location>
        <position position="382"/>
    </location>
</feature>
<keyword id="KW-0007">Acetylation</keyword>
<keyword id="KW-0128">Catecholamine metabolism</keyword>
<keyword id="KW-0274">FAD</keyword>
<keyword id="KW-0285">Flavoprotein</keyword>
<keyword id="KW-0472">Membrane</keyword>
<keyword id="KW-0496">Mitochondrion</keyword>
<keyword id="KW-1000">Mitochondrion outer membrane</keyword>
<keyword id="KW-0531">Neurotransmitter degradation</keyword>
<keyword id="KW-0560">Oxidoreductase</keyword>
<keyword id="KW-0597">Phosphoprotein</keyword>
<keyword id="KW-1185">Reference proteome</keyword>
<keyword id="KW-0812">Transmembrane</keyword>
<keyword id="KW-1133">Transmembrane helix</keyword>
<gene>
    <name evidence="3" type="primary">MAOA</name>
</gene>
<evidence type="ECO:0000250" key="1"/>
<evidence type="ECO:0000250" key="2">
    <source>
        <dbReference type="UniProtKB" id="P21396"/>
    </source>
</evidence>
<evidence type="ECO:0000250" key="3">
    <source>
        <dbReference type="UniProtKB" id="P21397"/>
    </source>
</evidence>
<evidence type="ECO:0000305" key="4"/>
<reference key="1">
    <citation type="submission" date="2004-11" db="EMBL/GenBank/DDBJ databases">
        <authorList>
            <consortium name="The German cDNA consortium"/>
        </authorList>
    </citation>
    <scope>NUCLEOTIDE SEQUENCE [LARGE SCALE MRNA]</scope>
    <source>
        <tissue>Kidney</tissue>
    </source>
</reference>
<proteinExistence type="evidence at transcript level"/>
<accession>Q5RE60</accession>
<accession>Q5RF20</accession>
<comment type="function">
    <text evidence="2">Catalyzes the oxidative deamination of primary and some secondary amine such as neurotransmitters, with concomitant reduction of oxygen to hydrogen peroxide and has important functions in the metabolism of neuroactive and vasoactive amines in the central nervous system and peripheral tissues. Preferentially oxidizes serotonin. Also catalyzes the oxidative deamination of kynuramine to 3-(2-aminophenyl)-3-oxopropanal that can spontaneously condense to 4-hydroxyquinoline.</text>
</comment>
<comment type="catalytic activity">
    <reaction evidence="2">
        <text>a secondary aliphatic amine + O2 + H2O = a primary amine + an aldehyde + H2O2</text>
        <dbReference type="Rhea" id="RHEA:26414"/>
        <dbReference type="ChEBI" id="CHEBI:15377"/>
        <dbReference type="ChEBI" id="CHEBI:15379"/>
        <dbReference type="ChEBI" id="CHEBI:16240"/>
        <dbReference type="ChEBI" id="CHEBI:17478"/>
        <dbReference type="ChEBI" id="CHEBI:58855"/>
        <dbReference type="ChEBI" id="CHEBI:65296"/>
        <dbReference type="EC" id="1.4.3.4"/>
    </reaction>
</comment>
<comment type="catalytic activity">
    <reaction evidence="2">
        <text>a primary methyl amine + O2 + H2O = an aldehyde + H2O2 + NH4(+)</text>
        <dbReference type="Rhea" id="RHEA:16153"/>
        <dbReference type="ChEBI" id="CHEBI:15377"/>
        <dbReference type="ChEBI" id="CHEBI:15379"/>
        <dbReference type="ChEBI" id="CHEBI:16240"/>
        <dbReference type="ChEBI" id="CHEBI:17478"/>
        <dbReference type="ChEBI" id="CHEBI:28938"/>
        <dbReference type="ChEBI" id="CHEBI:228804"/>
        <dbReference type="EC" id="1.4.3.21"/>
    </reaction>
</comment>
<comment type="catalytic activity">
    <reaction evidence="2">
        <text>(R)-adrenaline + O2 + H2O = (R)-3,4-dihydroxymandelaldehyde + methylamine + H2O2</text>
        <dbReference type="Rhea" id="RHEA:51168"/>
        <dbReference type="ChEBI" id="CHEBI:15377"/>
        <dbReference type="ChEBI" id="CHEBI:15379"/>
        <dbReference type="ChEBI" id="CHEBI:16240"/>
        <dbReference type="ChEBI" id="CHEBI:59338"/>
        <dbReference type="ChEBI" id="CHEBI:71406"/>
        <dbReference type="ChEBI" id="CHEBI:180943"/>
    </reaction>
</comment>
<comment type="catalytic activity">
    <reaction evidence="2">
        <text>dopamine + O2 + H2O = 3,4-dihydroxyphenylacetaldehyde + H2O2 + NH4(+)</text>
        <dbReference type="Rhea" id="RHEA:27946"/>
        <dbReference type="ChEBI" id="CHEBI:15377"/>
        <dbReference type="ChEBI" id="CHEBI:15379"/>
        <dbReference type="ChEBI" id="CHEBI:16240"/>
        <dbReference type="ChEBI" id="CHEBI:27978"/>
        <dbReference type="ChEBI" id="CHEBI:28938"/>
        <dbReference type="ChEBI" id="CHEBI:59905"/>
    </reaction>
</comment>
<comment type="catalytic activity">
    <reaction evidence="2">
        <text>tyramine + O2 + H2O = (4-hydroxyphenyl)acetaldehyde + H2O2 + NH4(+)</text>
        <dbReference type="Rhea" id="RHEA:30591"/>
        <dbReference type="ChEBI" id="CHEBI:15377"/>
        <dbReference type="ChEBI" id="CHEBI:15379"/>
        <dbReference type="ChEBI" id="CHEBI:15621"/>
        <dbReference type="ChEBI" id="CHEBI:16240"/>
        <dbReference type="ChEBI" id="CHEBI:28938"/>
        <dbReference type="ChEBI" id="CHEBI:327995"/>
    </reaction>
</comment>
<comment type="catalytic activity">
    <reaction evidence="2">
        <text>(R)-noradrenaline + O2 + H2O = (R)-3,4-dihydroxymandelaldehyde + H2O2 + NH4(+)</text>
        <dbReference type="Rhea" id="RHEA:69076"/>
        <dbReference type="ChEBI" id="CHEBI:15377"/>
        <dbReference type="ChEBI" id="CHEBI:15379"/>
        <dbReference type="ChEBI" id="CHEBI:16240"/>
        <dbReference type="ChEBI" id="CHEBI:28938"/>
        <dbReference type="ChEBI" id="CHEBI:72587"/>
        <dbReference type="ChEBI" id="CHEBI:180943"/>
    </reaction>
</comment>
<comment type="catalytic activity">
    <reaction evidence="2">
        <text>serotonin + O2 + H2O = (5-hydroxyindol-3-yl)acetaldehyde + H2O2 + NH4(+)</text>
        <dbReference type="Rhea" id="RHEA:69072"/>
        <dbReference type="ChEBI" id="CHEBI:15377"/>
        <dbReference type="ChEBI" id="CHEBI:15379"/>
        <dbReference type="ChEBI" id="CHEBI:16240"/>
        <dbReference type="ChEBI" id="CHEBI:28938"/>
        <dbReference type="ChEBI" id="CHEBI:50157"/>
        <dbReference type="ChEBI" id="CHEBI:350546"/>
    </reaction>
</comment>
<comment type="catalytic activity">
    <reaction evidence="2">
        <text>kynuramine + O2 + H2O = 3-(2-aminophenyl)-3-oxopropanal + H2O2 + NH4(+)</text>
        <dbReference type="Rhea" id="RHEA:59596"/>
        <dbReference type="ChEBI" id="CHEBI:15377"/>
        <dbReference type="ChEBI" id="CHEBI:15379"/>
        <dbReference type="ChEBI" id="CHEBI:16240"/>
        <dbReference type="ChEBI" id="CHEBI:28938"/>
        <dbReference type="ChEBI" id="CHEBI:180898"/>
        <dbReference type="ChEBI" id="CHEBI:180899"/>
    </reaction>
    <physiologicalReaction direction="left-to-right" evidence="2">
        <dbReference type="Rhea" id="RHEA:59597"/>
    </physiologicalReaction>
</comment>
<comment type="catalytic activity">
    <reaction evidence="2">
        <text>tryptamine + O2 + H2O = indole-3-acetaldehyde + H2O2 + NH4(+)</text>
        <dbReference type="Rhea" id="RHEA:59416"/>
        <dbReference type="ChEBI" id="CHEBI:15377"/>
        <dbReference type="ChEBI" id="CHEBI:15379"/>
        <dbReference type="ChEBI" id="CHEBI:16240"/>
        <dbReference type="ChEBI" id="CHEBI:18086"/>
        <dbReference type="ChEBI" id="CHEBI:28938"/>
        <dbReference type="ChEBI" id="CHEBI:57887"/>
    </reaction>
</comment>
<comment type="catalytic activity">
    <reaction evidence="2">
        <text>2-phenylethylamine + O2 + H2O = 2-phenylacetaldehyde + H2O2 + NH4(+)</text>
        <dbReference type="Rhea" id="RHEA:25265"/>
        <dbReference type="ChEBI" id="CHEBI:15377"/>
        <dbReference type="ChEBI" id="CHEBI:15379"/>
        <dbReference type="ChEBI" id="CHEBI:16240"/>
        <dbReference type="ChEBI" id="CHEBI:16424"/>
        <dbReference type="ChEBI" id="CHEBI:28938"/>
        <dbReference type="ChEBI" id="CHEBI:225237"/>
    </reaction>
</comment>
<comment type="cofactor">
    <cofactor evidence="3">
        <name>FAD</name>
        <dbReference type="ChEBI" id="CHEBI:57692"/>
    </cofactor>
</comment>
<comment type="subunit">
    <text evidence="3">Monomer, homo- or heterodimer (containing two subunits of similar size). Each subunit contains a covalently bound flavin. Enzymatically active as monomer (By similarity).</text>
</comment>
<comment type="subcellular location">
    <subcellularLocation>
        <location evidence="2">Mitochondrion outer membrane</location>
        <topology evidence="2">Single-pass type IV membrane protein</topology>
        <orientation evidence="2">Cytoplasmic side</orientation>
    </subcellularLocation>
</comment>
<comment type="similarity">
    <text evidence="4">Belongs to the flavin monoamine oxidase family.</text>
</comment>
<organism>
    <name type="scientific">Pongo abelii</name>
    <name type="common">Sumatran orangutan</name>
    <name type="synonym">Pongo pygmaeus abelii</name>
    <dbReference type="NCBI Taxonomy" id="9601"/>
    <lineage>
        <taxon>Eukaryota</taxon>
        <taxon>Metazoa</taxon>
        <taxon>Chordata</taxon>
        <taxon>Craniata</taxon>
        <taxon>Vertebrata</taxon>
        <taxon>Euteleostomi</taxon>
        <taxon>Mammalia</taxon>
        <taxon>Eutheria</taxon>
        <taxon>Euarchontoglires</taxon>
        <taxon>Primates</taxon>
        <taxon>Haplorrhini</taxon>
        <taxon>Catarrhini</taxon>
        <taxon>Hominidae</taxon>
        <taxon>Pongo</taxon>
    </lineage>
</organism>
<sequence length="527" mass="59666">MENQEKASIAGHMFDVVVIGGGISGLSAAKLLTEYGVSVLVLEARDRVGGRTYTIRNEHVDYVDVGGAYVGPTQNRILRLSKELGIETYKVNVSERLVQYVKGKTYPFRGAFPPVWNPIAYLDYNNLWRTIDNMGKEIPADAPWEAQHADEWDKMTMKELIDKICWTKTARRFAYLFVNINVTSEPHEVSALWFLWYVKQCGGTTRIFSVTNGGQERKFVGGSGQVSERIMDLLGDQVKLNHPVTHVDQSSNNIIIETLNHEHYECKYVINAIPPTLTAKIHFRPELPAERNQLIQRLPMGAIIKCMMYYKEAFWKKKDYCGCMIIEDEDAPISITLDDTKPDGSLPAIMGFILARKADRLAKLHKEIRKKKICELYAKVLGSQEALHPVHYEEKNWCEEQYSGGCYTAYFPPGIMTQYGRVIRQPVGRIFFAGTETATKWSGYMEGAVEAGERAAREVLNGLGKVTEKDIWVQEPESKDVPAVEITHTFWERNLPSVSGLLKIIGFSTSVTALGFVLYKYKLLPRS</sequence>
<protein>
    <recommendedName>
        <fullName evidence="3">Amine oxidase [flavin-containing] A</fullName>
        <ecNumber evidence="2">1.4.3.21</ecNumber>
        <ecNumber evidence="2">1.4.3.4</ecNumber>
    </recommendedName>
    <alternativeName>
        <fullName>Monoamine oxidase type A</fullName>
        <shortName>MAO-A</shortName>
    </alternativeName>
</protein>
<name>AOFA_PONAB</name>
<dbReference type="EC" id="1.4.3.21" evidence="2"/>
<dbReference type="EC" id="1.4.3.4" evidence="2"/>
<dbReference type="EMBL" id="CR857341">
    <property type="protein sequence ID" value="CAH89637.1"/>
    <property type="molecule type" value="mRNA"/>
</dbReference>
<dbReference type="EMBL" id="CR857677">
    <property type="protein sequence ID" value="CAH89947.1"/>
    <property type="molecule type" value="mRNA"/>
</dbReference>
<dbReference type="RefSeq" id="NP_001124913.1">
    <property type="nucleotide sequence ID" value="NM_001131441.1"/>
</dbReference>
<dbReference type="SMR" id="Q5RE60"/>
<dbReference type="FunCoup" id="Q5RE60">
    <property type="interactions" value="901"/>
</dbReference>
<dbReference type="STRING" id="9601.ENSPPYP00000022677"/>
<dbReference type="GeneID" id="100171783"/>
<dbReference type="KEGG" id="pon:100171783"/>
<dbReference type="CTD" id="4128"/>
<dbReference type="eggNOG" id="KOG0029">
    <property type="taxonomic scope" value="Eukaryota"/>
</dbReference>
<dbReference type="HOGENOM" id="CLU_312365_0_0_1"/>
<dbReference type="InParanoid" id="Q5RE60"/>
<dbReference type="OrthoDB" id="7777654at2759"/>
<dbReference type="Proteomes" id="UP000001595">
    <property type="component" value="Unplaced"/>
</dbReference>
<dbReference type="GO" id="GO:0005741">
    <property type="term" value="C:mitochondrial outer membrane"/>
    <property type="evidence" value="ECO:0007669"/>
    <property type="project" value="UniProtKB-SubCell"/>
</dbReference>
<dbReference type="GO" id="GO:0050660">
    <property type="term" value="F:flavin adenine dinucleotide binding"/>
    <property type="evidence" value="ECO:0007669"/>
    <property type="project" value="TreeGrafter"/>
</dbReference>
<dbReference type="GO" id="GO:0097621">
    <property type="term" value="F:monoamine oxidase activity"/>
    <property type="evidence" value="ECO:0000250"/>
    <property type="project" value="UniProtKB"/>
</dbReference>
<dbReference type="GO" id="GO:0008131">
    <property type="term" value="F:primary methylamine oxidase activity"/>
    <property type="evidence" value="ECO:0000250"/>
    <property type="project" value="UniProtKB"/>
</dbReference>
<dbReference type="GO" id="GO:0006584">
    <property type="term" value="P:catecholamine metabolic process"/>
    <property type="evidence" value="ECO:0007669"/>
    <property type="project" value="UniProtKB-KW"/>
</dbReference>
<dbReference type="FunFam" id="1.10.405.10:FF:000005">
    <property type="entry name" value="Amine oxidase [flavin-containing]"/>
    <property type="match status" value="1"/>
</dbReference>
<dbReference type="Gene3D" id="3.90.660.10">
    <property type="match status" value="1"/>
</dbReference>
<dbReference type="Gene3D" id="6.10.250.130">
    <property type="match status" value="1"/>
</dbReference>
<dbReference type="Gene3D" id="3.50.50.60">
    <property type="entry name" value="FAD/NAD(P)-binding domain"/>
    <property type="match status" value="1"/>
</dbReference>
<dbReference type="Gene3D" id="1.10.405.10">
    <property type="entry name" value="Guanine Nucleotide Dissociation Inhibitor, domain 1"/>
    <property type="match status" value="1"/>
</dbReference>
<dbReference type="InterPro" id="IPR002937">
    <property type="entry name" value="Amino_oxidase"/>
</dbReference>
<dbReference type="InterPro" id="IPR036188">
    <property type="entry name" value="FAD/NAD-bd_sf"/>
</dbReference>
<dbReference type="InterPro" id="IPR001613">
    <property type="entry name" value="Flavin_amine_oxidase"/>
</dbReference>
<dbReference type="InterPro" id="IPR050703">
    <property type="entry name" value="Flavin_MAO"/>
</dbReference>
<dbReference type="PANTHER" id="PTHR43563">
    <property type="entry name" value="AMINE OXIDASE"/>
    <property type="match status" value="1"/>
</dbReference>
<dbReference type="PANTHER" id="PTHR43563:SF11">
    <property type="entry name" value="AMINE OXIDASE [FLAVIN-CONTAINING] A"/>
    <property type="match status" value="1"/>
</dbReference>
<dbReference type="Pfam" id="PF01593">
    <property type="entry name" value="Amino_oxidase"/>
    <property type="match status" value="1"/>
</dbReference>
<dbReference type="PRINTS" id="PR00757">
    <property type="entry name" value="AMINEOXDASEF"/>
</dbReference>
<dbReference type="SUPFAM" id="SSF54373">
    <property type="entry name" value="FAD-linked reductases, C-terminal domain"/>
    <property type="match status" value="1"/>
</dbReference>
<dbReference type="SUPFAM" id="SSF51905">
    <property type="entry name" value="FAD/NAD(P)-binding domain"/>
    <property type="match status" value="1"/>
</dbReference>